<organism>
    <name type="scientific">Gluconacetobacter diazotrophicus (strain ATCC 49037 / DSM 5601 / CCUG 37298 / CIP 103539 / LMG 7603 / PAl5)</name>
    <dbReference type="NCBI Taxonomy" id="272568"/>
    <lineage>
        <taxon>Bacteria</taxon>
        <taxon>Pseudomonadati</taxon>
        <taxon>Pseudomonadota</taxon>
        <taxon>Alphaproteobacteria</taxon>
        <taxon>Acetobacterales</taxon>
        <taxon>Acetobacteraceae</taxon>
        <taxon>Gluconacetobacter</taxon>
    </lineage>
</organism>
<keyword id="KW-0884">PQQ biosynthesis</keyword>
<keyword id="KW-1185">Reference proteome</keyword>
<feature type="chain" id="PRO_1000082787" description="Coenzyme PQQ synthesis protein A">
    <location>
        <begin position="1"/>
        <end position="26"/>
    </location>
</feature>
<feature type="cross-link" description="Pyrroloquinoline quinone (Glu-Tyr)" evidence="1">
    <location>
        <begin position="16"/>
        <end position="20"/>
    </location>
</feature>
<gene>
    <name evidence="1" type="primary">pqqA</name>
    <name type="ordered locus">GDI1271</name>
    <name type="ordered locus">Gdia_1982</name>
</gene>
<sequence length="26" mass="2835">MAWTAPKITEVPLGAEINSYVCGQKK</sequence>
<name>PQQA_GLUDA</name>
<evidence type="ECO:0000255" key="1">
    <source>
        <dbReference type="HAMAP-Rule" id="MF_00656"/>
    </source>
</evidence>
<evidence type="ECO:0000305" key="2"/>
<protein>
    <recommendedName>
        <fullName evidence="1">Coenzyme PQQ synthesis protein A</fullName>
    </recommendedName>
    <alternativeName>
        <fullName evidence="1">Pyrroloquinoline quinone biosynthesis protein A</fullName>
    </alternativeName>
</protein>
<dbReference type="EMBL" id="AM889285">
    <property type="protein sequence ID" value="CAP55214.1"/>
    <property type="molecule type" value="Genomic_DNA"/>
</dbReference>
<dbReference type="EMBL" id="CP001189">
    <property type="protein sequence ID" value="ACI51742.1"/>
    <property type="status" value="ALT_INIT"/>
    <property type="molecule type" value="Genomic_DNA"/>
</dbReference>
<dbReference type="RefSeq" id="WP_012224451.1">
    <property type="nucleotide sequence ID" value="NC_011365.1"/>
</dbReference>
<dbReference type="STRING" id="272568.GDI1271"/>
<dbReference type="KEGG" id="gdi:GDI1271"/>
<dbReference type="KEGG" id="gdj:Gdia_1982"/>
<dbReference type="HOGENOM" id="CLU_3252199_0_0_5"/>
<dbReference type="UniPathway" id="UPA00539"/>
<dbReference type="Proteomes" id="UP000001176">
    <property type="component" value="Chromosome"/>
</dbReference>
<dbReference type="GO" id="GO:0018189">
    <property type="term" value="P:pyrroloquinoline quinone biosynthetic process"/>
    <property type="evidence" value="ECO:0007669"/>
    <property type="project" value="UniProtKB-UniRule"/>
</dbReference>
<dbReference type="HAMAP" id="MF_00656">
    <property type="entry name" value="PQQ_syn_PqqA"/>
    <property type="match status" value="1"/>
</dbReference>
<dbReference type="InterPro" id="IPR011725">
    <property type="entry name" value="PQQ_synth_PqqA"/>
</dbReference>
<dbReference type="NCBIfam" id="TIGR02107">
    <property type="entry name" value="PQQ_syn_pqqA"/>
    <property type="match status" value="1"/>
</dbReference>
<dbReference type="Pfam" id="PF08042">
    <property type="entry name" value="PqqA"/>
    <property type="match status" value="1"/>
</dbReference>
<proteinExistence type="inferred from homology"/>
<reference key="1">
    <citation type="journal article" date="2009" name="BMC Genomics">
        <title>Complete genome sequence of the sugarcane nitrogen-fixing endophyte Gluconacetobacter diazotrophicus Pal5.</title>
        <authorList>
            <person name="Bertalan M."/>
            <person name="Albano R."/>
            <person name="de Padua V."/>
            <person name="Rouws L."/>
            <person name="Rojas C."/>
            <person name="Hemerly A."/>
            <person name="Teixeira K."/>
            <person name="Schwab S."/>
            <person name="Araujo J."/>
            <person name="Oliveira A."/>
            <person name="Franca L."/>
            <person name="Magalhaes V."/>
            <person name="Alqueres S."/>
            <person name="Cardoso A."/>
            <person name="Almeida W."/>
            <person name="Loureiro M.M."/>
            <person name="Nogueira E."/>
            <person name="Cidade D."/>
            <person name="Oliveira D."/>
            <person name="Simao T."/>
            <person name="Macedo J."/>
            <person name="Valadao A."/>
            <person name="Dreschsel M."/>
            <person name="Freitas F."/>
            <person name="Vidal M."/>
            <person name="Guedes H."/>
            <person name="Rodrigues E."/>
            <person name="Meneses C."/>
            <person name="Brioso P."/>
            <person name="Pozzer L."/>
            <person name="Figueiredo D."/>
            <person name="Montano H."/>
            <person name="Junior J."/>
            <person name="de Souza Filho G."/>
            <person name="Martin Quintana Flores V."/>
            <person name="Ferreira B."/>
            <person name="Branco A."/>
            <person name="Gonzalez P."/>
            <person name="Guillobel H."/>
            <person name="Lemos M."/>
            <person name="Seibel L."/>
            <person name="Macedo J."/>
            <person name="Alves-Ferreira M."/>
            <person name="Sachetto-Martins G."/>
            <person name="Coelho A."/>
            <person name="Santos E."/>
            <person name="Amaral G."/>
            <person name="Neves A."/>
            <person name="Pacheco A.B."/>
            <person name="Carvalho D."/>
            <person name="Lery L."/>
            <person name="Bisch P."/>
            <person name="Rossle S.C."/>
            <person name="Urmenyi T."/>
            <person name="Rael Pereira A."/>
            <person name="Silva R."/>
            <person name="Rondinelli E."/>
            <person name="von Kruger W."/>
            <person name="Martins O."/>
            <person name="Baldani J.I."/>
            <person name="Ferreira P.C."/>
        </authorList>
    </citation>
    <scope>NUCLEOTIDE SEQUENCE [LARGE SCALE GENOMIC DNA]</scope>
    <source>
        <strain>ATCC 49037 / DSM 5601 / CCUG 37298 / CIP 103539 / LMG 7603 / PAl5</strain>
    </source>
</reference>
<reference key="2">
    <citation type="journal article" date="2010" name="Stand. Genomic Sci.">
        <title>Two genome sequences of the same bacterial strain, Gluconacetobacter diazotrophicus PAl 5, suggest a new standard in genome sequence submission.</title>
        <authorList>
            <person name="Giongo A."/>
            <person name="Tyler H.L."/>
            <person name="Zipperer U.N."/>
            <person name="Triplett E.W."/>
        </authorList>
    </citation>
    <scope>NUCLEOTIDE SEQUENCE [LARGE SCALE GENOMIC DNA]</scope>
    <source>
        <strain>ATCC 49037 / DSM 5601 / CCUG 37298 / CIP 103539 / LMG 7603 / PAl5</strain>
    </source>
</reference>
<comment type="function">
    <text evidence="1">Required for coenzyme pyrroloquinoline quinone (PQQ) biosynthesis. PQQ is probably formed by cross-linking a specific glutamate to a specific tyrosine residue and excising these residues from the peptide.</text>
</comment>
<comment type="pathway">
    <text evidence="1">Cofactor biosynthesis; pyrroloquinoline quinone biosynthesis.</text>
</comment>
<comment type="similarity">
    <text evidence="1">Belongs to the PqqA family.</text>
</comment>
<comment type="sequence caution" evidence="2">
    <conflict type="erroneous initiation">
        <sequence resource="EMBL-CDS" id="ACI51742"/>
    </conflict>
    <text>Extended N-terminus.</text>
</comment>
<accession>A9HEC6</accession>
<accession>B5ZCT4</accession>